<name>DPO3A_ECOLI</name>
<sequence>MSEPRFVHLRVHSDYSMIDGLAKTAPLVKKAAALGMPALAITDFTNLCGLVKFYGAGHGAGIKPIVGADFNVQCDLLGDELTHLTVLAANNTGYQNLTLLISKAYQRGYGAAGPIIDRDWLIELNEGLILLSGGRMGDVGRSLLRGNSALVDECVAFYEEHFPDRYFLELIRTGRPDEESYLHAAVELAEARGLPVVATNDVRFIDSSDFDAHEIRVAIHDGFTLDDPKRPRNYSPQQYMRSEEEMCELFADIPEALANTVEIAKRCNVTVRLGEYFLPQFPTGDMSTEDYLVKRAKEGLEERLAFLFPDEEERLKRRPEYDERLETELQVINQMGFPGYFLIVMEFIQWSKDNGVPVGPGRGSGAGSLVAYALKITDLDPLEFDLLFERFLNPERVSMPDFDVDFCMEKRDQVIEHVADMYGRDAVSQIITFGTMAAKAVIRDVGRVLGHPYGFVDRISKLIPPDPGMTLAKAFEAEPQLPEIYEADEEVKALIDMARKLEGVTRNAGKHAGGVVIAPTKITDFAPLYCDEEGKHPVTQFDKSDVEYAGLVKFDFLGLRTLTIINWALEMINKRRAKNGEPPLDIAAIPLDDKKSFDMLQRSETTAVFQLESRGMKDLIKRLQPDCFEDMIALVALFRPGPLQSGMVDNFIDRKHGREEISYPDVQWQHESLKPVLEPTYGIILYQEQVMQIAQVLSGYTLGGADMLRRAMGKKKPEEMAKQRSVFAEGAEKNGINAELAMKIFDLVEKFAGYGFNKSHSAAYALVSYQTLWLKAHYPAEFMAAVMTADMDNTEKVVGLVDECWRMGLKILPPDINSGLYHFHVNDDGEIVYGIGAIKGVGEGPIEAIIEARNKGGYFRELFDLCARTDTKKLNRRVLEKLIMSGAFDRLGPHRAALMNSLGDALKAADQHAKAEAIGQADMFGVLAEEPEQIEQSYASCQPWPEQVVLDGERETLGLYLTGHPINQYLKEIERYVGGVRLKDMHPTERGKVITAAGLVVAARVMVTKRGNRIGICTLDDRSGRLEVMLFTDALDKYQQLLEKDRILIVSGQVSFDDFSGGLKMTAREVMDIDEAREKYARGLAISLTDRQIDDQLLNRLRQSLEPHRSGTIPVHLYYQRADARARLRFGATWRVSPSDRLLNDLRGLIGSEQVELEFD</sequence>
<gene>
    <name type="primary">dnaE</name>
    <name type="synonym">polC</name>
    <name type="ordered locus">b0184</name>
    <name type="ordered locus">JW0179</name>
</gene>
<keyword id="KW-0002">3D-structure</keyword>
<keyword id="KW-0963">Cytoplasm</keyword>
<keyword id="KW-0235">DNA replication</keyword>
<keyword id="KW-0238">DNA-binding</keyword>
<keyword id="KW-0239">DNA-directed DNA polymerase</keyword>
<keyword id="KW-0548">Nucleotidyltransferase</keyword>
<keyword id="KW-1185">Reference proteome</keyword>
<keyword id="KW-0808">Transferase</keyword>
<feature type="chain" id="PRO_0000103321" description="DNA polymerase III subunit alpha">
    <location>
        <begin position="1"/>
        <end position="1160"/>
    </location>
</feature>
<feature type="mutagenesis site" description="Loss of interaction with beta sliding clamp (dnaN)." evidence="1">
    <original>QADMF</original>
    <variation>PADMP</variation>
    <location>
        <begin position="920"/>
        <end position="924"/>
    </location>
</feature>
<feature type="mutagenesis site" description="Increases binding to beta sliding clamp (dnaN), increases stability of enzyme complex." evidence="6">
    <original>ADM</original>
    <variation>LDL</variation>
    <location>
        <begin position="921"/>
        <end position="923"/>
    </location>
</feature>
<feature type="mutagenesis site" description="Loss of interaction with beta sliding clamp (dnaN)." evidence="1">
    <original>MF</original>
    <variation>KK</variation>
    <location>
        <begin position="923"/>
        <end position="924"/>
    </location>
</feature>
<feature type="turn" evidence="14">
    <location>
        <begin position="14"/>
        <end position="17"/>
    </location>
</feature>
<feature type="strand" evidence="14">
    <location>
        <begin position="18"/>
        <end position="20"/>
    </location>
</feature>
<feature type="helix" evidence="14">
    <location>
        <begin position="25"/>
        <end position="33"/>
    </location>
</feature>
<feature type="strand" evidence="14">
    <location>
        <begin position="37"/>
        <end position="44"/>
    </location>
</feature>
<feature type="helix" evidence="14">
    <location>
        <begin position="50"/>
        <end position="59"/>
    </location>
</feature>
<feature type="strand" evidence="14">
    <location>
        <begin position="63"/>
        <end position="73"/>
    </location>
</feature>
<feature type="helix" evidence="14">
    <location>
        <begin position="75"/>
        <end position="77"/>
    </location>
</feature>
<feature type="strand" evidence="14">
    <location>
        <begin position="82"/>
        <end position="88"/>
    </location>
</feature>
<feature type="helix" evidence="14">
    <location>
        <begin position="91"/>
        <end position="106"/>
    </location>
</feature>
<feature type="helix" evidence="14">
    <location>
        <begin position="120"/>
        <end position="124"/>
    </location>
</feature>
<feature type="strand" evidence="14">
    <location>
        <begin position="128"/>
        <end position="131"/>
    </location>
</feature>
<feature type="helix" evidence="14">
    <location>
        <begin position="134"/>
        <end position="136"/>
    </location>
</feature>
<feature type="helix" evidence="14">
    <location>
        <begin position="138"/>
        <end position="145"/>
    </location>
</feature>
<feature type="helix" evidence="14">
    <location>
        <begin position="148"/>
        <end position="161"/>
    </location>
</feature>
<feature type="strand" evidence="14">
    <location>
        <begin position="166"/>
        <end position="170"/>
    </location>
</feature>
<feature type="helix" evidence="14">
    <location>
        <begin position="178"/>
        <end position="192"/>
    </location>
</feature>
<feature type="strand" evidence="14">
    <location>
        <begin position="196"/>
        <end position="198"/>
    </location>
</feature>
<feature type="strand" evidence="14">
    <location>
        <begin position="204"/>
        <end position="206"/>
    </location>
</feature>
<feature type="helix" evidence="14">
    <location>
        <begin position="207"/>
        <end position="209"/>
    </location>
</feature>
<feature type="helix" evidence="14">
    <location>
        <begin position="210"/>
        <end position="221"/>
    </location>
</feature>
<feature type="helix" evidence="14">
    <location>
        <begin position="243"/>
        <end position="249"/>
    </location>
</feature>
<feature type="turn" evidence="14">
    <location>
        <begin position="250"/>
        <end position="252"/>
    </location>
</feature>
<feature type="helix" evidence="14">
    <location>
        <begin position="254"/>
        <end position="266"/>
    </location>
</feature>
<feature type="strand" evidence="13">
    <location>
        <begin position="284"/>
        <end position="286"/>
    </location>
</feature>
<feature type="helix" evidence="12">
    <location>
        <begin position="288"/>
        <end position="307"/>
    </location>
</feature>
<feature type="helix" evidence="12">
    <location>
        <begin position="311"/>
        <end position="317"/>
    </location>
</feature>
<feature type="helix" evidence="12">
    <location>
        <begin position="319"/>
        <end position="334"/>
    </location>
</feature>
<feature type="helix" evidence="12">
    <location>
        <begin position="338"/>
        <end position="353"/>
    </location>
</feature>
<feature type="helix" evidence="12">
    <location>
        <begin position="365"/>
        <end position="367"/>
    </location>
</feature>
<feature type="helix" evidence="12">
    <location>
        <begin position="369"/>
        <end position="373"/>
    </location>
</feature>
<feature type="turn" evidence="12">
    <location>
        <begin position="381"/>
        <end position="385"/>
    </location>
</feature>
<feature type="helix" evidence="12">
    <location>
        <begin position="388"/>
        <end position="390"/>
    </location>
</feature>
<feature type="strand" evidence="15">
    <location>
        <begin position="405"/>
        <end position="407"/>
    </location>
</feature>
<feature type="helix" evidence="12">
    <location>
        <begin position="408"/>
        <end position="410"/>
    </location>
</feature>
<feature type="helix" evidence="12">
    <location>
        <begin position="411"/>
        <end position="422"/>
    </location>
</feature>
<feature type="helix" evidence="12">
    <location>
        <begin position="424"/>
        <end position="426"/>
    </location>
</feature>
<feature type="strand" evidence="12">
    <location>
        <begin position="427"/>
        <end position="430"/>
    </location>
</feature>
<feature type="strand" evidence="12">
    <location>
        <begin position="433"/>
        <end position="435"/>
    </location>
</feature>
<feature type="helix" evidence="12">
    <location>
        <begin position="438"/>
        <end position="448"/>
    </location>
</feature>
<feature type="helix" evidence="12">
    <location>
        <begin position="453"/>
        <end position="460"/>
    </location>
</feature>
<feature type="helix" evidence="12">
    <location>
        <begin position="471"/>
        <end position="477"/>
    </location>
</feature>
<feature type="helix" evidence="12">
    <location>
        <begin position="480"/>
        <end position="487"/>
    </location>
</feature>
<feature type="helix" evidence="12">
    <location>
        <begin position="489"/>
        <end position="501"/>
    </location>
</feature>
<feature type="strand" evidence="12">
    <location>
        <begin position="505"/>
        <end position="508"/>
    </location>
</feature>
<feature type="strand" evidence="12">
    <location>
        <begin position="514"/>
        <end position="517"/>
    </location>
</feature>
<feature type="helix" evidence="12">
    <location>
        <begin position="522"/>
        <end position="524"/>
    </location>
</feature>
<feature type="strand" evidence="12">
    <location>
        <begin position="538"/>
        <end position="541"/>
    </location>
</feature>
<feature type="helix" evidence="12">
    <location>
        <begin position="543"/>
        <end position="548"/>
    </location>
</feature>
<feature type="strand" evidence="12">
    <location>
        <begin position="552"/>
        <end position="556"/>
    </location>
</feature>
<feature type="helix" evidence="12">
    <location>
        <begin position="561"/>
        <end position="574"/>
    </location>
</feature>
<feature type="turn" evidence="12">
    <location>
        <begin position="575"/>
        <end position="580"/>
    </location>
</feature>
<feature type="helix" evidence="12">
    <location>
        <begin position="586"/>
        <end position="588"/>
    </location>
</feature>
<feature type="helix" evidence="12">
    <location>
        <begin position="594"/>
        <end position="601"/>
    </location>
</feature>
<feature type="strand" evidence="13">
    <location>
        <begin position="608"/>
        <end position="610"/>
    </location>
</feature>
<feature type="helix" evidence="12">
    <location>
        <begin position="614"/>
        <end position="623"/>
    </location>
</feature>
<feature type="helix" evidence="12">
    <location>
        <begin position="628"/>
        <end position="637"/>
    </location>
</feature>
<feature type="helix" evidence="12">
    <location>
        <begin position="640"/>
        <end position="643"/>
    </location>
</feature>
<feature type="helix" evidence="12">
    <location>
        <begin position="647"/>
        <end position="655"/>
    </location>
</feature>
<feature type="strand" evidence="13">
    <location>
        <begin position="657"/>
        <end position="659"/>
    </location>
</feature>
<feature type="strand" evidence="12">
    <location>
        <begin position="666"/>
        <end position="669"/>
    </location>
</feature>
<feature type="helix" evidence="12">
    <location>
        <begin position="671"/>
        <end position="673"/>
    </location>
</feature>
<feature type="helix" evidence="12">
    <location>
        <begin position="674"/>
        <end position="677"/>
    </location>
</feature>
<feature type="helix" evidence="12">
    <location>
        <begin position="678"/>
        <end position="680"/>
    </location>
</feature>
<feature type="helix" evidence="12">
    <location>
        <begin position="687"/>
        <end position="698"/>
    </location>
</feature>
<feature type="helix" evidence="12">
    <location>
        <begin position="702"/>
        <end position="714"/>
    </location>
</feature>
<feature type="helix" evidence="12">
    <location>
        <begin position="717"/>
        <end position="733"/>
    </location>
</feature>
<feature type="helix" evidence="12">
    <location>
        <begin position="738"/>
        <end position="752"/>
    </location>
</feature>
<feature type="helix" evidence="12">
    <location>
        <begin position="758"/>
        <end position="777"/>
    </location>
</feature>
<feature type="helix" evidence="12">
    <location>
        <begin position="779"/>
        <end position="789"/>
    </location>
</feature>
<feature type="turn" evidence="12">
    <location>
        <begin position="790"/>
        <end position="792"/>
    </location>
</feature>
<feature type="helix" evidence="12">
    <location>
        <begin position="794"/>
        <end position="806"/>
    </location>
</feature>
<feature type="turn" evidence="12">
    <location>
        <begin position="816"/>
        <end position="818"/>
    </location>
</feature>
<feature type="strand" evidence="12">
    <location>
        <begin position="820"/>
        <end position="822"/>
    </location>
</feature>
<feature type="helix" evidence="12">
    <location>
        <begin position="835"/>
        <end position="837"/>
    </location>
</feature>
<feature type="helix" evidence="12">
    <location>
        <begin position="843"/>
        <end position="854"/>
    </location>
</feature>
<feature type="strand" evidence="15">
    <location>
        <begin position="855"/>
        <end position="857"/>
    </location>
</feature>
<feature type="helix" evidence="12">
    <location>
        <begin position="862"/>
        <end position="865"/>
    </location>
</feature>
<feature type="strand" evidence="12">
    <location>
        <begin position="871"/>
        <end position="874"/>
    </location>
</feature>
<feature type="helix" evidence="12">
    <location>
        <begin position="876"/>
        <end position="884"/>
    </location>
</feature>
<feature type="turn" evidence="12">
    <location>
        <begin position="885"/>
        <end position="891"/>
    </location>
</feature>
<feature type="helix" evidence="12">
    <location>
        <begin position="895"/>
        <end position="899"/>
    </location>
</feature>
<feature type="strand" evidence="12">
    <location>
        <begin position="902"/>
        <end position="905"/>
    </location>
</feature>
<feature type="helix" evidence="12">
    <location>
        <begin position="906"/>
        <end position="909"/>
    </location>
</feature>
<accession>P10443</accession>
<comment type="function">
    <text evidence="5 7">DNA polymerase III is a complex, multichain enzyme responsible for most of the replicative synthesis in bacteria (PubMed:2932432). This DNA polymerase also exhibits 3' to 5' exonuclease activity. The alpha chain is the DNA polymerase catalytic subunit (PubMed:2932432). It is tethered to replicating DNA by the beta sliding clamp (dnaN), which confers extremely high processivity to the catalytic subunit, copying a 5.4 kb genome in 11 seconds, a speed of at least 500 nucleotides/second at 30 degrees Celsius (PubMed:2413035).</text>
</comment>
<comment type="catalytic activity">
    <reaction evidence="7">
        <text>DNA(n) + a 2'-deoxyribonucleoside 5'-triphosphate = DNA(n+1) + diphosphate</text>
        <dbReference type="Rhea" id="RHEA:22508"/>
        <dbReference type="Rhea" id="RHEA-COMP:17339"/>
        <dbReference type="Rhea" id="RHEA-COMP:17340"/>
        <dbReference type="ChEBI" id="CHEBI:33019"/>
        <dbReference type="ChEBI" id="CHEBI:61560"/>
        <dbReference type="ChEBI" id="CHEBI:173112"/>
        <dbReference type="EC" id="2.7.7.7"/>
    </reaction>
</comment>
<comment type="subunit">
    <text evidence="1 2 3 4">The DNA polymerase III holoenzyme complex contains at least 10 different subunits organized into 3 functionally essential subassemblies: the Pol III core, the beta sliding clamp processivity factor and the clamp-loading complex. The Pol III core (subunits alpha, epsilon and theta) contains the polymerase and the 3'-5' exonuclease proofreading activities (PubMed:2040637). The polymerase is tethered to the template via the dimeric beta sliding clamp processivity factor. The clamp loader (also called gamma complex) assembles the beta sliding clamp onto the primed template and plays a central role in the organization and communication at the replication fork. The clamp-loading complex contains delta, delta', psi and chi, and 3 copies of either or both of two different DnaX proteins, gamma and tau. The DNA replisome complex has a single clamp loader (3 tau and 1 each of delta, delta', psi and chi subunits) which binds 3 Pol III cores (1 core on the leading strand and 2 on the lagging strand) each with a beta sliding clamp dimer. Additional proteins in the replisome are other copies of gamma, psi and chi, Ssb, DNA helicase and RNA primase (PubMed:20413500, PubMed:22157955). Interacts with the beta sliding-clamp subunit via the peptide Gln-Ala-Asp-Met-Phe (residues 920-924) (PubMed:11573000).</text>
</comment>
<comment type="interaction">
    <interactant intactId="EBI-549111">
        <id>P10443</id>
    </interactant>
    <interactant intactId="EBI-542385">
        <id>P0A988</id>
        <label>dnaN</label>
    </interactant>
    <organismsDiffer>false</organismsDiffer>
    <experiments>19</experiments>
</comment>
<comment type="interaction">
    <interactant intactId="EBI-549111">
        <id>P10443</id>
    </interactant>
    <interactant intactId="EBI-549131">
        <id>P03007</id>
        <label>dnaQ</label>
    </interactant>
    <organismsDiffer>false</organismsDiffer>
    <experiments>25</experiments>
</comment>
<comment type="interaction">
    <interactant intactId="EBI-549111">
        <id>P10443</id>
    </interactant>
    <interactant intactId="EBI-549140">
        <id>P06710</id>
        <label>dnaX</label>
    </interactant>
    <organismsDiffer>false</organismsDiffer>
    <experiments>12</experiments>
</comment>
<comment type="interaction">
    <interactant intactId="EBI-549111">
        <id>P10443</id>
    </interactant>
    <interactant intactId="EBI-549153">
        <id>P28630</id>
        <label>holA</label>
    </interactant>
    <organismsDiffer>false</organismsDiffer>
    <experiments>5</experiments>
</comment>
<comment type="interaction">
    <interactant intactId="EBI-549111">
        <id>P10443</id>
    </interactant>
    <interactant intactId="EBI-543702">
        <id>P0A7K2</id>
        <label>rplL</label>
    </interactant>
    <organismsDiffer>false</organismsDiffer>
    <experiments>3</experiments>
</comment>
<comment type="interaction">
    <interactant intactId="EBI-549111">
        <id>P10443</id>
    </interactant>
    <interactant intactId="EBI-543661">
        <id>P77806</id>
        <label>ybdL</label>
    </interactant>
    <organismsDiffer>false</organismsDiffer>
    <experiments>3</experiments>
</comment>
<comment type="subcellular location">
    <subcellularLocation>
        <location>Cytoplasm</location>
    </subcellularLocation>
</comment>
<comment type="similarity">
    <text evidence="8">Belongs to the DNA polymerase type-C family. DnaE subfamily.</text>
</comment>
<comment type="sequence caution" evidence="8">
    <conflict type="erroneous initiation">
        <sequence resource="EMBL-CDS" id="AAA70369"/>
    </conflict>
    <text>Extended N-terminus.</text>
</comment>
<reference key="1">
    <citation type="journal article" date="1987" name="J. Bacteriol.">
        <title>Sequence analysis of the Escherichia coli dnaE gene.</title>
        <authorList>
            <person name="Tomasiewicz H.G."/>
            <person name="McHenry C.S."/>
        </authorList>
    </citation>
    <scope>NUCLEOTIDE SEQUENCE [GENOMIC DNA]</scope>
</reference>
<reference key="2">
    <citation type="journal article" date="1991" name="J. Bacteriol.">
        <authorList>
            <person name="Tomasiewicz H.G."/>
            <person name="McHenry C.S."/>
        </authorList>
    </citation>
    <scope>ERRATUM OF PUBMED:3316192</scope>
</reference>
<reference key="3">
    <citation type="submission" date="1996-02" db="EMBL/GenBank/DDBJ databases">
        <title>Systematic sequencing of the Escherichia coli genome: analysis of the 4.0 - 6.0 min (189,987 - 281,416bp) region.</title>
        <authorList>
            <person name="Takemoto K."/>
            <person name="Mori H."/>
            <person name="Murayama N."/>
            <person name="Kataoka K."/>
            <person name="Yano M."/>
            <person name="Itoh T."/>
            <person name="Yamamoto Y."/>
            <person name="Inokuchi H."/>
            <person name="Miki T."/>
            <person name="Hatada E."/>
            <person name="Fukuda R."/>
            <person name="Ichihara S."/>
            <person name="Mizuno T."/>
            <person name="Makino K."/>
            <person name="Nakata A."/>
            <person name="Yura T."/>
            <person name="Sampei G."/>
            <person name="Mizobuchi K."/>
        </authorList>
    </citation>
    <scope>NUCLEOTIDE SEQUENCE [LARGE SCALE GENOMIC DNA]</scope>
    <source>
        <strain>K12 / W3110 / ATCC 27325 / DSM 5911</strain>
    </source>
</reference>
<reference key="4">
    <citation type="submission" date="1997-01" db="EMBL/GenBank/DDBJ databases">
        <title>Sequence of minutes 4-25 of Escherichia coli.</title>
        <authorList>
            <person name="Chung E."/>
            <person name="Allen E."/>
            <person name="Araujo R."/>
            <person name="Aparicio A.M."/>
            <person name="Davis K."/>
            <person name="Duncan M."/>
            <person name="Federspiel N."/>
            <person name="Hyman R."/>
            <person name="Kalman S."/>
            <person name="Komp C."/>
            <person name="Kurdi O."/>
            <person name="Lew H."/>
            <person name="Lin D."/>
            <person name="Namath A."/>
            <person name="Oefner P."/>
            <person name="Roberts D."/>
            <person name="Schramm S."/>
            <person name="Davis R.W."/>
        </authorList>
    </citation>
    <scope>NUCLEOTIDE SEQUENCE [LARGE SCALE GENOMIC DNA]</scope>
    <source>
        <strain>K12 / MG1655 / ATCC 47076</strain>
    </source>
</reference>
<reference key="5">
    <citation type="journal article" date="1997" name="Science">
        <title>The complete genome sequence of Escherichia coli K-12.</title>
        <authorList>
            <person name="Blattner F.R."/>
            <person name="Plunkett G. III"/>
            <person name="Bloch C.A."/>
            <person name="Perna N.T."/>
            <person name="Burland V."/>
            <person name="Riley M."/>
            <person name="Collado-Vides J."/>
            <person name="Glasner J.D."/>
            <person name="Rode C.K."/>
            <person name="Mayhew G.F."/>
            <person name="Gregor J."/>
            <person name="Davis N.W."/>
            <person name="Kirkpatrick H.A."/>
            <person name="Goeden M.A."/>
            <person name="Rose D.J."/>
            <person name="Mau B."/>
            <person name="Shao Y."/>
        </authorList>
    </citation>
    <scope>NUCLEOTIDE SEQUENCE [LARGE SCALE GENOMIC DNA]</scope>
    <source>
        <strain>K12 / MG1655 / ATCC 47076</strain>
    </source>
</reference>
<reference key="6">
    <citation type="journal article" date="2006" name="Mol. Syst. Biol.">
        <title>Highly accurate genome sequences of Escherichia coli K-12 strains MG1655 and W3110.</title>
        <authorList>
            <person name="Hayashi K."/>
            <person name="Morooka N."/>
            <person name="Yamamoto Y."/>
            <person name="Fujita K."/>
            <person name="Isono K."/>
            <person name="Choi S."/>
            <person name="Ohtsubo E."/>
            <person name="Baba T."/>
            <person name="Wanner B.L."/>
            <person name="Mori H."/>
            <person name="Horiuchi T."/>
        </authorList>
    </citation>
    <scope>NUCLEOTIDE SEQUENCE [LARGE SCALE GENOMIC DNA]</scope>
    <source>
        <strain>K12 / W3110 / ATCC 27325 / DSM 5911</strain>
    </source>
</reference>
<reference key="7">
    <citation type="journal article" date="1993" name="J. Bacteriol.">
        <title>Growth rate regulation of Escherichia coli acetyl coenzyme A carboxylase, which catalyzes the first committed step of lipid biosynthesis.</title>
        <authorList>
            <person name="Li S.-J."/>
            <person name="Cronan J.E. Jr."/>
        </authorList>
    </citation>
    <scope>NUCLEOTIDE SEQUENCE [GENOMIC DNA] OF 1065-1160</scope>
    <scope>NUCLEOTIDE SEQUENCE [MRNA] OF 1070-1160</scope>
</reference>
<reference key="8">
    <citation type="submission" date="1995-12" db="EMBL/GenBank/DDBJ databases">
        <authorList>
            <person name="Yamamoto Y."/>
        </authorList>
    </citation>
    <scope>NUCLEOTIDE SEQUENCE [GENOMIC DNA] OF 1137-1160</scope>
    <source>
        <strain>K12 / W3110 / ATCC 27325 / DSM 5911</strain>
    </source>
</reference>
<reference key="9">
    <citation type="journal article" date="1982" name="J. Bacteriol.">
        <title>Cloning and identification of the product of the dnaE gene of Escherichia coli.</title>
        <authorList>
            <person name="Welch M.M."/>
            <person name="McHenry C.S."/>
        </authorList>
    </citation>
    <scope>IDENTIFICATION OF DNAE AS THE ALPHA SUBUNIT</scope>
    <source>
        <strain>K12 / CS520</strain>
    </source>
</reference>
<reference key="10">
    <citation type="journal article" date="1985" name="J. Biol. Chem.">
        <title>Dynamics of DNA polymerase III holoenzyme of Escherichia coli in replication of a multiprimed template.</title>
        <authorList>
            <person name="O'Donnell M.E."/>
            <person name="Kornberg A."/>
        </authorList>
    </citation>
    <scope>FUNCTION AND HIGH PROCESSIVITY</scope>
</reference>
<reference key="11">
    <citation type="journal article" date="1985" name="J. Biol. Chem.">
        <title>The polymerase subunit of DNA polymerase III of Escherichia coli. I. Amplification of the dnaE gene product and polymerase activity of the alpha subunit.</title>
        <authorList>
            <person name="Maki H."/>
            <person name="Horiuchi T."/>
            <person name="Kornberg A."/>
        </authorList>
    </citation>
    <scope>FUNCTION</scope>
    <scope>CATALYTIC ACTIVITY</scope>
</reference>
<reference key="12">
    <citation type="journal article" date="1991" name="J. Biol. Chem.">
        <title>Mechanism of the sliding beta-clamp of DNA polymerase III holoenzyme.</title>
        <authorList>
            <person name="Stukenberg P.T."/>
            <person name="Studwell-Vaughan P.S."/>
            <person name="O'Donnell M."/>
        </authorList>
    </citation>
    <scope>FUNCTION</scope>
    <scope>SUBUNIT</scope>
    <scope>INTERACTION WITH DNAN AND DNAQ</scope>
</reference>
<reference key="13">
    <citation type="journal article" date="2001" name="Proc. Natl. Acad. Sci. U.S.A.">
        <title>A universal protein-protein interaction motif in the eubacterial DNA replication and repair systems.</title>
        <authorList>
            <person name="Dalrymple B.P."/>
            <person name="Kongsuwan K."/>
            <person name="Wijffels G."/>
            <person name="Dixon N.E."/>
            <person name="Jennings P.A."/>
        </authorList>
    </citation>
    <scope>INTERACTION WITH DNAN</scope>
    <scope>MUTAGENESIS OF 920-GLN--PHE-924 AND 923-MET-PHE-924</scope>
    <source>
        <strain>K12 / XL1-Blue</strain>
    </source>
</reference>
<reference key="14">
    <citation type="journal article" date="2010" name="Science">
        <title>Stoichiometry and architecture of active DNA replication machinery in Escherichia coli.</title>
        <authorList>
            <person name="Reyes-Lamothe R."/>
            <person name="Sherratt D.J."/>
            <person name="Leake M.C."/>
        </authorList>
    </citation>
    <scope>REPLISOME COMPLEX</scope>
    <scope>SUBUNIT</scope>
</reference>
<reference key="15">
    <citation type="journal article" date="2011" name="Nat. Struct. Mol. Biol.">
        <title>Single-molecule studies reveal the function of a third polymerase in the replisome.</title>
        <authorList>
            <person name="Georgescu R.E."/>
            <person name="Kurth I."/>
            <person name="O'Donnell M.E."/>
        </authorList>
    </citation>
    <scope>REPLISOME COMPLEX</scope>
    <scope>SUBUNIT</scope>
</reference>
<reference evidence="9 10 11" key="16">
    <citation type="journal article" date="2015" name="Elife">
        <title>cryo-EM structures of the E. coli replicative DNA polymerase reveal its dynamic interactions with the DNA sliding clamp, exonuclease and tau.</title>
        <authorList>
            <person name="Fernandez-Leiro R."/>
            <person name="Conrad J."/>
            <person name="Scheres S.H."/>
            <person name="Lamers M.H."/>
        </authorList>
    </citation>
    <scope>STRUCTURE BY ELECTRON MICROSCOPY (7.30 ANGSTROMS) OF DNAE; DNAN; DNAQ; DNAX WITH AND WITHOUT DNA</scope>
    <scope>SUBUNIT</scope>
    <scope>MUTAGENESIS OF 921-ALA--MET-923</scope>
    <scope>DNA-BINDING</scope>
</reference>
<reference key="17">
    <citation type="journal article" date="1992" name="Bioessays">
        <title>Accessory protein function in the DNA polymerase III holoenzyme from E. coli.</title>
        <authorList>
            <person name="O'Donnell M."/>
        </authorList>
    </citation>
    <scope>REVIEW</scope>
</reference>
<reference key="18">
    <citation type="journal article" date="1993" name="Genetics">
        <title>Antimutator mutations in the alpha subunit of Escherichia coli DNA polymerase III: identification of the responsible mutations and alignment with other DNA polymerases.</title>
        <authorList>
            <person name="Fijalkowska I.J."/>
            <person name="Schaaper R.M."/>
        </authorList>
    </citation>
    <scope>MUTAGENESIS</scope>
</reference>
<protein>
    <recommendedName>
        <fullName>DNA polymerase III subunit alpha</fullName>
        <ecNumber evidence="7">2.7.7.7</ecNumber>
    </recommendedName>
</protein>
<dbReference type="EC" id="2.7.7.7" evidence="7"/>
<dbReference type="EMBL" id="M19334">
    <property type="protein sequence ID" value="AAC36920.1"/>
    <property type="molecule type" value="Genomic_DNA"/>
</dbReference>
<dbReference type="EMBL" id="U70214">
    <property type="protein sequence ID" value="AAB08613.1"/>
    <property type="molecule type" value="Genomic_DNA"/>
</dbReference>
<dbReference type="EMBL" id="U00096">
    <property type="protein sequence ID" value="AAC73295.1"/>
    <property type="molecule type" value="Genomic_DNA"/>
</dbReference>
<dbReference type="EMBL" id="AP009048">
    <property type="protein sequence ID" value="BAA77859.1"/>
    <property type="molecule type" value="Genomic_DNA"/>
</dbReference>
<dbReference type="EMBL" id="S52931">
    <property type="protein sequence ID" value="AAB24889.1"/>
    <property type="molecule type" value="mRNA"/>
</dbReference>
<dbReference type="EMBL" id="M96394">
    <property type="protein sequence ID" value="AAA70369.1"/>
    <property type="status" value="ALT_INIT"/>
    <property type="molecule type" value="Genomic_DNA"/>
</dbReference>
<dbReference type="EMBL" id="D49445">
    <property type="protein sequence ID" value="BAA08424.1"/>
    <property type="molecule type" value="Genomic_DNA"/>
</dbReference>
<dbReference type="PIR" id="C28390">
    <property type="entry name" value="DJEC3A"/>
</dbReference>
<dbReference type="RefSeq" id="NP_414726.1">
    <property type="nucleotide sequence ID" value="NC_000913.3"/>
</dbReference>
<dbReference type="RefSeq" id="WP_001294757.1">
    <property type="nucleotide sequence ID" value="NZ_STEB01000032.1"/>
</dbReference>
<dbReference type="PDB" id="2HNH">
    <property type="method" value="X-ray"/>
    <property type="resolution" value="2.30 A"/>
    <property type="chains" value="A=1-910"/>
</dbReference>
<dbReference type="PDB" id="2HQA">
    <property type="method" value="X-ray"/>
    <property type="resolution" value="2.60 A"/>
    <property type="chains" value="A=1-917"/>
</dbReference>
<dbReference type="PDB" id="4GX8">
    <property type="method" value="X-ray"/>
    <property type="resolution" value="1.70 A"/>
    <property type="chains" value="A/B/C/D=1-270"/>
</dbReference>
<dbReference type="PDB" id="4GX9">
    <property type="method" value="X-ray"/>
    <property type="resolution" value="2.15 A"/>
    <property type="chains" value="A/B/C/D=1-270"/>
</dbReference>
<dbReference type="PDB" id="4JOM">
    <property type="method" value="X-ray"/>
    <property type="resolution" value="2.90 A"/>
    <property type="chains" value="A=1-917"/>
</dbReference>
<dbReference type="PDB" id="5FKU">
    <property type="method" value="EM"/>
    <property type="resolution" value="8.34 A"/>
    <property type="chains" value="A=1-1160"/>
</dbReference>
<dbReference type="PDB" id="5FKV">
    <property type="method" value="EM"/>
    <property type="resolution" value="8.00 A"/>
    <property type="chains" value="A=1-1160"/>
</dbReference>
<dbReference type="PDB" id="5FKW">
    <property type="method" value="EM"/>
    <property type="resolution" value="7.30 A"/>
    <property type="chains" value="A=1-1160"/>
</dbReference>
<dbReference type="PDB" id="5M1S">
    <property type="method" value="EM"/>
    <property type="resolution" value="6.70 A"/>
    <property type="chains" value="A=1-927"/>
</dbReference>
<dbReference type="PDBsum" id="2HNH"/>
<dbReference type="PDBsum" id="2HQA"/>
<dbReference type="PDBsum" id="4GX8"/>
<dbReference type="PDBsum" id="4GX9"/>
<dbReference type="PDBsum" id="4JOM"/>
<dbReference type="PDBsum" id="5FKU"/>
<dbReference type="PDBsum" id="5FKV"/>
<dbReference type="PDBsum" id="5FKW"/>
<dbReference type="PDBsum" id="5M1S"/>
<dbReference type="EMDB" id="EMD-3198"/>
<dbReference type="EMDB" id="EMD-3201"/>
<dbReference type="EMDB" id="EMD-3202"/>
<dbReference type="EMDB" id="EMD-4141"/>
<dbReference type="SMR" id="P10443"/>
<dbReference type="BioGRID" id="4262228">
    <property type="interactions" value="258"/>
</dbReference>
<dbReference type="BioGRID" id="849277">
    <property type="interactions" value="5"/>
</dbReference>
<dbReference type="ComplexPortal" id="CPX-1925">
    <property type="entry name" value="DNA polymerase III core complex"/>
</dbReference>
<dbReference type="DIP" id="DIP-9458N"/>
<dbReference type="FunCoup" id="P10443">
    <property type="interactions" value="552"/>
</dbReference>
<dbReference type="IntAct" id="P10443">
    <property type="interactions" value="70"/>
</dbReference>
<dbReference type="MINT" id="P10443"/>
<dbReference type="STRING" id="511145.b0184"/>
<dbReference type="BindingDB" id="P10443"/>
<dbReference type="ChEMBL" id="CHEMBL4621"/>
<dbReference type="jPOST" id="P10443"/>
<dbReference type="PaxDb" id="511145-b0184"/>
<dbReference type="EnsemblBacteria" id="AAC73295">
    <property type="protein sequence ID" value="AAC73295"/>
    <property type="gene ID" value="b0184"/>
</dbReference>
<dbReference type="GeneID" id="944877"/>
<dbReference type="KEGG" id="ecj:JW0179"/>
<dbReference type="KEGG" id="eco:b0184"/>
<dbReference type="KEGG" id="ecoc:C3026_00845"/>
<dbReference type="PATRIC" id="fig|1411691.4.peg.2095"/>
<dbReference type="EchoBASE" id="EB0234"/>
<dbReference type="eggNOG" id="COG0587">
    <property type="taxonomic scope" value="Bacteria"/>
</dbReference>
<dbReference type="HOGENOM" id="CLU_001600_0_2_6"/>
<dbReference type="InParanoid" id="P10443"/>
<dbReference type="OMA" id="DFCMDGR"/>
<dbReference type="OrthoDB" id="9803237at2"/>
<dbReference type="PhylomeDB" id="P10443"/>
<dbReference type="BioCyc" id="EcoCyc:EG10238-MONOMER"/>
<dbReference type="BioCyc" id="MetaCyc:EG10238-MONOMER"/>
<dbReference type="EvolutionaryTrace" id="P10443"/>
<dbReference type="PRO" id="PR:P10443"/>
<dbReference type="Proteomes" id="UP000000625">
    <property type="component" value="Chromosome"/>
</dbReference>
<dbReference type="GO" id="GO:0005737">
    <property type="term" value="C:cytoplasm"/>
    <property type="evidence" value="ECO:0000314"/>
    <property type="project" value="EcoliWiki"/>
</dbReference>
<dbReference type="GO" id="GO:0005829">
    <property type="term" value="C:cytosol"/>
    <property type="evidence" value="ECO:0000314"/>
    <property type="project" value="EcoCyc"/>
</dbReference>
<dbReference type="GO" id="GO:0009360">
    <property type="term" value="C:DNA polymerase III complex"/>
    <property type="evidence" value="ECO:0000303"/>
    <property type="project" value="ComplexPortal"/>
</dbReference>
<dbReference type="GO" id="GO:0044776">
    <property type="term" value="C:DNA polymerase III, core complex"/>
    <property type="evidence" value="ECO:0000314"/>
    <property type="project" value="EcoCyc"/>
</dbReference>
<dbReference type="GO" id="GO:0030894">
    <property type="term" value="C:replisome"/>
    <property type="evidence" value="ECO:0000303"/>
    <property type="project" value="ComplexPortal"/>
</dbReference>
<dbReference type="GO" id="GO:0003677">
    <property type="term" value="F:DNA binding"/>
    <property type="evidence" value="ECO:0007669"/>
    <property type="project" value="UniProtKB-KW"/>
</dbReference>
<dbReference type="GO" id="GO:0003887">
    <property type="term" value="F:DNA-directed DNA polymerase activity"/>
    <property type="evidence" value="ECO:0000314"/>
    <property type="project" value="EcoliWiki"/>
</dbReference>
<dbReference type="GO" id="GO:0006261">
    <property type="term" value="P:DNA-templated DNA replication"/>
    <property type="evidence" value="ECO:0000303"/>
    <property type="project" value="ComplexPortal"/>
</dbReference>
<dbReference type="GO" id="GO:0006273">
    <property type="term" value="P:lagging strand elongation"/>
    <property type="evidence" value="ECO:0000314"/>
    <property type="project" value="ComplexPortal"/>
</dbReference>
<dbReference type="GO" id="GO:0006272">
    <property type="term" value="P:leading strand elongation"/>
    <property type="evidence" value="ECO:0000314"/>
    <property type="project" value="ComplexPortal"/>
</dbReference>
<dbReference type="CDD" id="cd04485">
    <property type="entry name" value="DnaE_OBF"/>
    <property type="match status" value="1"/>
</dbReference>
<dbReference type="CDD" id="cd07433">
    <property type="entry name" value="PHP_PolIIIA_DnaE1"/>
    <property type="match status" value="1"/>
</dbReference>
<dbReference type="FunFam" id="1.10.10.1600:FF:000001">
    <property type="entry name" value="DNA polymerase III subunit alpha"/>
    <property type="match status" value="1"/>
</dbReference>
<dbReference type="FunFam" id="1.10.150.870:FF:000001">
    <property type="entry name" value="DNA polymerase III subunit alpha"/>
    <property type="match status" value="1"/>
</dbReference>
<dbReference type="FunFam" id="2.40.50.140:FF:000106">
    <property type="entry name" value="DNA polymerase III subunit alpha"/>
    <property type="match status" value="1"/>
</dbReference>
<dbReference type="FunFam" id="3.20.20.140:FF:000028">
    <property type="entry name" value="DNA polymerase III subunit alpha"/>
    <property type="match status" value="1"/>
</dbReference>
<dbReference type="Gene3D" id="1.10.150.870">
    <property type="match status" value="1"/>
</dbReference>
<dbReference type="Gene3D" id="1.10.10.1600">
    <property type="entry name" value="Bacterial DNA polymerase III alpha subunit, thumb domain"/>
    <property type="match status" value="1"/>
</dbReference>
<dbReference type="Gene3D" id="3.20.20.140">
    <property type="entry name" value="Metal-dependent hydrolases"/>
    <property type="match status" value="1"/>
</dbReference>
<dbReference type="Gene3D" id="2.40.50.140">
    <property type="entry name" value="Nucleic acid-binding proteins"/>
    <property type="match status" value="1"/>
</dbReference>
<dbReference type="InterPro" id="IPR011708">
    <property type="entry name" value="DNA_pol3_alpha_NTPase_dom"/>
</dbReference>
<dbReference type="InterPro" id="IPR041931">
    <property type="entry name" value="DNA_pol3_alpha_thumb_dom"/>
</dbReference>
<dbReference type="InterPro" id="IPR040982">
    <property type="entry name" value="DNA_pol3_finger"/>
</dbReference>
<dbReference type="InterPro" id="IPR048472">
    <property type="entry name" value="DNA_pol_IIIA_C"/>
</dbReference>
<dbReference type="InterPro" id="IPR004805">
    <property type="entry name" value="DnaE2/DnaE/PolC"/>
</dbReference>
<dbReference type="InterPro" id="IPR029460">
    <property type="entry name" value="DNAPol_HHH"/>
</dbReference>
<dbReference type="InterPro" id="IPR012340">
    <property type="entry name" value="NA-bd_OB-fold"/>
</dbReference>
<dbReference type="InterPro" id="IPR004365">
    <property type="entry name" value="NA-bd_OB_tRNA"/>
</dbReference>
<dbReference type="InterPro" id="IPR004013">
    <property type="entry name" value="PHP_dom"/>
</dbReference>
<dbReference type="InterPro" id="IPR003141">
    <property type="entry name" value="Pol/His_phosphatase_N"/>
</dbReference>
<dbReference type="InterPro" id="IPR016195">
    <property type="entry name" value="Pol/histidinol_Pase-like"/>
</dbReference>
<dbReference type="InterPro" id="IPR049821">
    <property type="entry name" value="PolIIIA_DnaE1_PHP"/>
</dbReference>
<dbReference type="NCBIfam" id="TIGR00594">
    <property type="entry name" value="polc"/>
    <property type="match status" value="1"/>
</dbReference>
<dbReference type="NCBIfam" id="NF004226">
    <property type="entry name" value="PRK05673.1"/>
    <property type="match status" value="1"/>
</dbReference>
<dbReference type="PANTHER" id="PTHR32294">
    <property type="entry name" value="DNA POLYMERASE III SUBUNIT ALPHA"/>
    <property type="match status" value="1"/>
</dbReference>
<dbReference type="PANTHER" id="PTHR32294:SF0">
    <property type="entry name" value="DNA POLYMERASE III SUBUNIT ALPHA"/>
    <property type="match status" value="1"/>
</dbReference>
<dbReference type="Pfam" id="PF07733">
    <property type="entry name" value="DNA_pol3_alpha"/>
    <property type="match status" value="1"/>
</dbReference>
<dbReference type="Pfam" id="PF17657">
    <property type="entry name" value="DNA_pol3_finger"/>
    <property type="match status" value="1"/>
</dbReference>
<dbReference type="Pfam" id="PF20914">
    <property type="entry name" value="DNA_pol_IIIA_C"/>
    <property type="match status" value="1"/>
</dbReference>
<dbReference type="Pfam" id="PF14579">
    <property type="entry name" value="HHH_6"/>
    <property type="match status" value="1"/>
</dbReference>
<dbReference type="Pfam" id="PF02811">
    <property type="entry name" value="PHP"/>
    <property type="match status" value="1"/>
</dbReference>
<dbReference type="Pfam" id="PF01336">
    <property type="entry name" value="tRNA_anti-codon"/>
    <property type="match status" value="1"/>
</dbReference>
<dbReference type="SMART" id="SM00481">
    <property type="entry name" value="POLIIIAc"/>
    <property type="match status" value="1"/>
</dbReference>
<dbReference type="SUPFAM" id="SSF89550">
    <property type="entry name" value="PHP domain-like"/>
    <property type="match status" value="1"/>
</dbReference>
<evidence type="ECO:0000269" key="1">
    <source>
    </source>
</evidence>
<evidence type="ECO:0000269" key="2">
    <source>
    </source>
</evidence>
<evidence type="ECO:0000269" key="3">
    <source>
    </source>
</evidence>
<evidence type="ECO:0000269" key="4">
    <source>
    </source>
</evidence>
<evidence type="ECO:0000269" key="5">
    <source>
    </source>
</evidence>
<evidence type="ECO:0000269" key="6">
    <source>
    </source>
</evidence>
<evidence type="ECO:0000269" key="7">
    <source>
    </source>
</evidence>
<evidence type="ECO:0000305" key="8"/>
<evidence type="ECO:0007744" key="9">
    <source>
        <dbReference type="PDB" id="5FKU"/>
    </source>
</evidence>
<evidence type="ECO:0007744" key="10">
    <source>
        <dbReference type="PDB" id="5FKV"/>
    </source>
</evidence>
<evidence type="ECO:0007744" key="11">
    <source>
        <dbReference type="PDB" id="5FKW"/>
    </source>
</evidence>
<evidence type="ECO:0007829" key="12">
    <source>
        <dbReference type="PDB" id="2HNH"/>
    </source>
</evidence>
<evidence type="ECO:0007829" key="13">
    <source>
        <dbReference type="PDB" id="2HQA"/>
    </source>
</evidence>
<evidence type="ECO:0007829" key="14">
    <source>
        <dbReference type="PDB" id="4GX8"/>
    </source>
</evidence>
<evidence type="ECO:0007829" key="15">
    <source>
        <dbReference type="PDB" id="4JOM"/>
    </source>
</evidence>
<organism>
    <name type="scientific">Escherichia coli (strain K12)</name>
    <dbReference type="NCBI Taxonomy" id="83333"/>
    <lineage>
        <taxon>Bacteria</taxon>
        <taxon>Pseudomonadati</taxon>
        <taxon>Pseudomonadota</taxon>
        <taxon>Gammaproteobacteria</taxon>
        <taxon>Enterobacterales</taxon>
        <taxon>Enterobacteriaceae</taxon>
        <taxon>Escherichia</taxon>
    </lineage>
</organism>
<proteinExistence type="evidence at protein level"/>